<proteinExistence type="inferred from homology"/>
<gene>
    <name type="ORF">DDB_G0277335</name>
</gene>
<feature type="chain" id="PRO_0000333833" description="PXMP2/4 family protein 1">
    <location>
        <begin position="1"/>
        <end position="202"/>
    </location>
</feature>
<feature type="transmembrane region" description="Helical" evidence="1">
    <location>
        <begin position="21"/>
        <end position="41"/>
    </location>
</feature>
<feature type="transmembrane region" description="Helical" evidence="1">
    <location>
        <begin position="54"/>
        <end position="72"/>
    </location>
</feature>
<feature type="transmembrane region" description="Helical" evidence="1">
    <location>
        <begin position="138"/>
        <end position="154"/>
    </location>
</feature>
<feature type="transmembrane region" description="Helical" evidence="1">
    <location>
        <begin position="161"/>
        <end position="177"/>
    </location>
</feature>
<sequence>MNFRIFDKIGNSYKKSLQNRPVITKSLTGTVVFFLGDTLAQKIENRGYDPKRTLMMCTVGTFIVVPQIHFWFKFLDKTFTKPGWAGAIPKVVVDQLTFGPYLFVCNMTSVQLFHQGFNFDTHQWKDKMKKDFFPVLQKAWMIWPLTNCILFRFVHPDYRILISNLVSVGWNCILSTVSNKSFLKNNNNNNDPSISTMASLNE</sequence>
<accession>Q54ZX5</accession>
<accession>Q86K50</accession>
<protein>
    <recommendedName>
        <fullName>PXMP2/4 family protein 1</fullName>
    </recommendedName>
</protein>
<keyword id="KW-0472">Membrane</keyword>
<keyword id="KW-1185">Reference proteome</keyword>
<keyword id="KW-0812">Transmembrane</keyword>
<keyword id="KW-1133">Transmembrane helix</keyword>
<evidence type="ECO:0000255" key="1"/>
<evidence type="ECO:0000305" key="2"/>
<comment type="subcellular location">
    <subcellularLocation>
        <location evidence="2">Membrane</location>
        <topology evidence="2">Multi-pass membrane protein</topology>
    </subcellularLocation>
</comment>
<comment type="similarity">
    <text evidence="2">Belongs to the peroxisomal membrane protein PXMP2/4 family.</text>
</comment>
<name>PX24A_DICDI</name>
<organism>
    <name type="scientific">Dictyostelium discoideum</name>
    <name type="common">Social amoeba</name>
    <dbReference type="NCBI Taxonomy" id="44689"/>
    <lineage>
        <taxon>Eukaryota</taxon>
        <taxon>Amoebozoa</taxon>
        <taxon>Evosea</taxon>
        <taxon>Eumycetozoa</taxon>
        <taxon>Dictyostelia</taxon>
        <taxon>Dictyosteliales</taxon>
        <taxon>Dictyosteliaceae</taxon>
        <taxon>Dictyostelium</taxon>
    </lineage>
</organism>
<dbReference type="EMBL" id="AAFI02000019">
    <property type="protein sequence ID" value="EAL68854.1"/>
    <property type="molecule type" value="Genomic_DNA"/>
</dbReference>
<dbReference type="RefSeq" id="XP_642741.1">
    <property type="nucleotide sequence ID" value="XM_637649.1"/>
</dbReference>
<dbReference type="FunCoup" id="Q54ZX5">
    <property type="interactions" value="114"/>
</dbReference>
<dbReference type="STRING" id="44689.Q54ZX5"/>
<dbReference type="PaxDb" id="44689-DDB0302422"/>
<dbReference type="EnsemblProtists" id="EAL68854">
    <property type="protein sequence ID" value="EAL68854"/>
    <property type="gene ID" value="DDB_G0277335"/>
</dbReference>
<dbReference type="GeneID" id="8620934"/>
<dbReference type="KEGG" id="ddi:DDB_G0277335"/>
<dbReference type="dictyBase" id="DDB_G0277335"/>
<dbReference type="VEuPathDB" id="AmoebaDB:DDB_G0277335"/>
<dbReference type="eggNOG" id="KOG1944">
    <property type="taxonomic scope" value="Eukaryota"/>
</dbReference>
<dbReference type="HOGENOM" id="CLU_049109_8_2_1"/>
<dbReference type="InParanoid" id="Q54ZX5"/>
<dbReference type="OMA" id="RTLMMCT"/>
<dbReference type="PhylomeDB" id="Q54ZX5"/>
<dbReference type="Reactome" id="R-DDI-9033241">
    <property type="pathway name" value="Peroxisomal protein import"/>
</dbReference>
<dbReference type="PRO" id="PR:Q54ZX5"/>
<dbReference type="Proteomes" id="UP000002195">
    <property type="component" value="Chromosome 2"/>
</dbReference>
<dbReference type="GO" id="GO:0005737">
    <property type="term" value="C:cytoplasm"/>
    <property type="evidence" value="ECO:0000318"/>
    <property type="project" value="GO_Central"/>
</dbReference>
<dbReference type="GO" id="GO:0016020">
    <property type="term" value="C:membrane"/>
    <property type="evidence" value="ECO:0007669"/>
    <property type="project" value="UniProtKB-SubCell"/>
</dbReference>
<dbReference type="GO" id="GO:0005739">
    <property type="term" value="C:mitochondrion"/>
    <property type="evidence" value="ECO:0000318"/>
    <property type="project" value="GO_Central"/>
</dbReference>
<dbReference type="InterPro" id="IPR007248">
    <property type="entry name" value="Mpv17_PMP22"/>
</dbReference>
<dbReference type="PANTHER" id="PTHR11266">
    <property type="entry name" value="PEROXISOMAL MEMBRANE PROTEIN 2, PXMP2 MPV17"/>
    <property type="match status" value="1"/>
</dbReference>
<dbReference type="PANTHER" id="PTHR11266:SF17">
    <property type="entry name" value="PROTEIN MPV17"/>
    <property type="match status" value="1"/>
</dbReference>
<dbReference type="Pfam" id="PF04117">
    <property type="entry name" value="Mpv17_PMP22"/>
    <property type="match status" value="1"/>
</dbReference>
<reference key="1">
    <citation type="journal article" date="2002" name="Nature">
        <title>Sequence and analysis of chromosome 2 of Dictyostelium discoideum.</title>
        <authorList>
            <person name="Gloeckner G."/>
            <person name="Eichinger L."/>
            <person name="Szafranski K."/>
            <person name="Pachebat J.A."/>
            <person name="Bankier A.T."/>
            <person name="Dear P.H."/>
            <person name="Lehmann R."/>
            <person name="Baumgart C."/>
            <person name="Parra G."/>
            <person name="Abril J.F."/>
            <person name="Guigo R."/>
            <person name="Kumpf K."/>
            <person name="Tunggal B."/>
            <person name="Cox E.C."/>
            <person name="Quail M.A."/>
            <person name="Platzer M."/>
            <person name="Rosenthal A."/>
            <person name="Noegel A.A."/>
        </authorList>
    </citation>
    <scope>NUCLEOTIDE SEQUENCE [LARGE SCALE GENOMIC DNA]</scope>
    <source>
        <strain>AX4</strain>
    </source>
</reference>
<reference key="2">
    <citation type="journal article" date="2005" name="Nature">
        <title>The genome of the social amoeba Dictyostelium discoideum.</title>
        <authorList>
            <person name="Eichinger L."/>
            <person name="Pachebat J.A."/>
            <person name="Gloeckner G."/>
            <person name="Rajandream M.A."/>
            <person name="Sucgang R."/>
            <person name="Berriman M."/>
            <person name="Song J."/>
            <person name="Olsen R."/>
            <person name="Szafranski K."/>
            <person name="Xu Q."/>
            <person name="Tunggal B."/>
            <person name="Kummerfeld S."/>
            <person name="Madera M."/>
            <person name="Konfortov B.A."/>
            <person name="Rivero F."/>
            <person name="Bankier A.T."/>
            <person name="Lehmann R."/>
            <person name="Hamlin N."/>
            <person name="Davies R."/>
            <person name="Gaudet P."/>
            <person name="Fey P."/>
            <person name="Pilcher K."/>
            <person name="Chen G."/>
            <person name="Saunders D."/>
            <person name="Sodergren E.J."/>
            <person name="Davis P."/>
            <person name="Kerhornou A."/>
            <person name="Nie X."/>
            <person name="Hall N."/>
            <person name="Anjard C."/>
            <person name="Hemphill L."/>
            <person name="Bason N."/>
            <person name="Farbrother P."/>
            <person name="Desany B."/>
            <person name="Just E."/>
            <person name="Morio T."/>
            <person name="Rost R."/>
            <person name="Churcher C.M."/>
            <person name="Cooper J."/>
            <person name="Haydock S."/>
            <person name="van Driessche N."/>
            <person name="Cronin A."/>
            <person name="Goodhead I."/>
            <person name="Muzny D.M."/>
            <person name="Mourier T."/>
            <person name="Pain A."/>
            <person name="Lu M."/>
            <person name="Harper D."/>
            <person name="Lindsay R."/>
            <person name="Hauser H."/>
            <person name="James K.D."/>
            <person name="Quiles M."/>
            <person name="Madan Babu M."/>
            <person name="Saito T."/>
            <person name="Buchrieser C."/>
            <person name="Wardroper A."/>
            <person name="Felder M."/>
            <person name="Thangavelu M."/>
            <person name="Johnson D."/>
            <person name="Knights A."/>
            <person name="Loulseged H."/>
            <person name="Mungall K.L."/>
            <person name="Oliver K."/>
            <person name="Price C."/>
            <person name="Quail M.A."/>
            <person name="Urushihara H."/>
            <person name="Hernandez J."/>
            <person name="Rabbinowitsch E."/>
            <person name="Steffen D."/>
            <person name="Sanders M."/>
            <person name="Ma J."/>
            <person name="Kohara Y."/>
            <person name="Sharp S."/>
            <person name="Simmonds M.N."/>
            <person name="Spiegler S."/>
            <person name="Tivey A."/>
            <person name="Sugano S."/>
            <person name="White B."/>
            <person name="Walker D."/>
            <person name="Woodward J.R."/>
            <person name="Winckler T."/>
            <person name="Tanaka Y."/>
            <person name="Shaulsky G."/>
            <person name="Schleicher M."/>
            <person name="Weinstock G.M."/>
            <person name="Rosenthal A."/>
            <person name="Cox E.C."/>
            <person name="Chisholm R.L."/>
            <person name="Gibbs R.A."/>
            <person name="Loomis W.F."/>
            <person name="Platzer M."/>
            <person name="Kay R.R."/>
            <person name="Williams J.G."/>
            <person name="Dear P.H."/>
            <person name="Noegel A.A."/>
            <person name="Barrell B.G."/>
            <person name="Kuspa A."/>
        </authorList>
    </citation>
    <scope>NUCLEOTIDE SEQUENCE [LARGE SCALE GENOMIC DNA]</scope>
    <source>
        <strain>AX4</strain>
    </source>
</reference>